<dbReference type="EC" id="6.3.2.4"/>
<dbReference type="EMBL" id="M20793">
    <property type="protein sequence ID" value="AAA27056.1"/>
    <property type="molecule type" value="Genomic_DNA"/>
</dbReference>
<dbReference type="EMBL" id="AE006468">
    <property type="protein sequence ID" value="AAL19334.1"/>
    <property type="molecule type" value="Genomic_DNA"/>
</dbReference>
<dbReference type="PIR" id="A28642">
    <property type="entry name" value="CEEBDT"/>
</dbReference>
<dbReference type="RefSeq" id="NP_459375.1">
    <property type="nucleotide sequence ID" value="NC_003197.2"/>
</dbReference>
<dbReference type="RefSeq" id="WP_001096588.1">
    <property type="nucleotide sequence ID" value="NC_003197.2"/>
</dbReference>
<dbReference type="PDB" id="3I12">
    <property type="method" value="X-ray"/>
    <property type="resolution" value="2.20 A"/>
    <property type="chains" value="A/B/C/D=1-364"/>
</dbReference>
<dbReference type="PDB" id="3Q1K">
    <property type="method" value="X-ray"/>
    <property type="resolution" value="2.20 A"/>
    <property type="chains" value="A/B/C/D=1-364"/>
</dbReference>
<dbReference type="PDBsum" id="3I12"/>
<dbReference type="PDBsum" id="3Q1K"/>
<dbReference type="SMR" id="P0A1F0"/>
<dbReference type="STRING" id="99287.STM0380"/>
<dbReference type="PaxDb" id="99287-STM0380"/>
<dbReference type="GeneID" id="1251899"/>
<dbReference type="KEGG" id="stm:STM0380"/>
<dbReference type="PATRIC" id="fig|99287.12.peg.403"/>
<dbReference type="HOGENOM" id="CLU_039268_0_1_6"/>
<dbReference type="OMA" id="NMHSKYF"/>
<dbReference type="PhylomeDB" id="P0A1F0"/>
<dbReference type="BioCyc" id="SENT99287:STM0380-MONOMER"/>
<dbReference type="UniPathway" id="UPA00219"/>
<dbReference type="EvolutionaryTrace" id="P0A1F0"/>
<dbReference type="Proteomes" id="UP000001014">
    <property type="component" value="Chromosome"/>
</dbReference>
<dbReference type="GO" id="GO:0005829">
    <property type="term" value="C:cytosol"/>
    <property type="evidence" value="ECO:0000318"/>
    <property type="project" value="GO_Central"/>
</dbReference>
<dbReference type="GO" id="GO:0005524">
    <property type="term" value="F:ATP binding"/>
    <property type="evidence" value="ECO:0007669"/>
    <property type="project" value="UniProtKB-KW"/>
</dbReference>
<dbReference type="GO" id="GO:0008716">
    <property type="term" value="F:D-alanine-D-alanine ligase activity"/>
    <property type="evidence" value="ECO:0000318"/>
    <property type="project" value="GO_Central"/>
</dbReference>
<dbReference type="GO" id="GO:0046872">
    <property type="term" value="F:metal ion binding"/>
    <property type="evidence" value="ECO:0007669"/>
    <property type="project" value="UniProtKB-KW"/>
</dbReference>
<dbReference type="GO" id="GO:0071555">
    <property type="term" value="P:cell wall organization"/>
    <property type="evidence" value="ECO:0007669"/>
    <property type="project" value="UniProtKB-KW"/>
</dbReference>
<dbReference type="GO" id="GO:0009252">
    <property type="term" value="P:peptidoglycan biosynthetic process"/>
    <property type="evidence" value="ECO:0000318"/>
    <property type="project" value="GO_Central"/>
</dbReference>
<dbReference type="GO" id="GO:0008360">
    <property type="term" value="P:regulation of cell shape"/>
    <property type="evidence" value="ECO:0007669"/>
    <property type="project" value="UniProtKB-KW"/>
</dbReference>
<dbReference type="FunFam" id="3.30.1490.20:FF:000007">
    <property type="entry name" value="D-alanine--D-alanine ligase"/>
    <property type="match status" value="1"/>
</dbReference>
<dbReference type="FunFam" id="3.30.470.20:FF:000008">
    <property type="entry name" value="D-alanine--D-alanine ligase"/>
    <property type="match status" value="1"/>
</dbReference>
<dbReference type="FunFam" id="3.40.50.20:FF:000015">
    <property type="entry name" value="D-alanine--D-alanine ligase"/>
    <property type="match status" value="1"/>
</dbReference>
<dbReference type="Gene3D" id="3.40.50.20">
    <property type="match status" value="1"/>
</dbReference>
<dbReference type="Gene3D" id="3.30.1490.20">
    <property type="entry name" value="ATP-grasp fold, A domain"/>
    <property type="match status" value="1"/>
</dbReference>
<dbReference type="Gene3D" id="3.30.470.20">
    <property type="entry name" value="ATP-grasp fold, B domain"/>
    <property type="match status" value="1"/>
</dbReference>
<dbReference type="HAMAP" id="MF_00047">
    <property type="entry name" value="Dala_Dala_lig"/>
    <property type="match status" value="1"/>
</dbReference>
<dbReference type="InterPro" id="IPR011761">
    <property type="entry name" value="ATP-grasp"/>
</dbReference>
<dbReference type="InterPro" id="IPR013815">
    <property type="entry name" value="ATP_grasp_subdomain_1"/>
</dbReference>
<dbReference type="InterPro" id="IPR000291">
    <property type="entry name" value="D-Ala_lig_Van_CS"/>
</dbReference>
<dbReference type="InterPro" id="IPR005905">
    <property type="entry name" value="D_ala_D_ala"/>
</dbReference>
<dbReference type="InterPro" id="IPR011095">
    <property type="entry name" value="Dala_Dala_lig_C"/>
</dbReference>
<dbReference type="InterPro" id="IPR011127">
    <property type="entry name" value="Dala_Dala_lig_N"/>
</dbReference>
<dbReference type="InterPro" id="IPR016185">
    <property type="entry name" value="PreATP-grasp_dom_sf"/>
</dbReference>
<dbReference type="NCBIfam" id="TIGR01205">
    <property type="entry name" value="D_ala_D_alaTIGR"/>
    <property type="match status" value="1"/>
</dbReference>
<dbReference type="NCBIfam" id="NF002378">
    <property type="entry name" value="PRK01372.1"/>
    <property type="match status" value="1"/>
</dbReference>
<dbReference type="NCBIfam" id="NF002525">
    <property type="entry name" value="PRK01966.1-1"/>
    <property type="match status" value="1"/>
</dbReference>
<dbReference type="NCBIfam" id="NF002528">
    <property type="entry name" value="PRK01966.1-4"/>
    <property type="match status" value="1"/>
</dbReference>
<dbReference type="PANTHER" id="PTHR23132">
    <property type="entry name" value="D-ALANINE--D-ALANINE LIGASE"/>
    <property type="match status" value="1"/>
</dbReference>
<dbReference type="PANTHER" id="PTHR23132:SF25">
    <property type="entry name" value="D-ALANINE--D-ALANINE LIGASE A"/>
    <property type="match status" value="1"/>
</dbReference>
<dbReference type="Pfam" id="PF07478">
    <property type="entry name" value="Dala_Dala_lig_C"/>
    <property type="match status" value="1"/>
</dbReference>
<dbReference type="Pfam" id="PF01820">
    <property type="entry name" value="Dala_Dala_lig_N"/>
    <property type="match status" value="1"/>
</dbReference>
<dbReference type="PIRSF" id="PIRSF039102">
    <property type="entry name" value="Ddl/VanB"/>
    <property type="match status" value="1"/>
</dbReference>
<dbReference type="SUPFAM" id="SSF56059">
    <property type="entry name" value="Glutathione synthetase ATP-binding domain-like"/>
    <property type="match status" value="1"/>
</dbReference>
<dbReference type="SUPFAM" id="SSF52440">
    <property type="entry name" value="PreATP-grasp domain"/>
    <property type="match status" value="1"/>
</dbReference>
<dbReference type="PROSITE" id="PS50975">
    <property type="entry name" value="ATP_GRASP"/>
    <property type="match status" value="1"/>
</dbReference>
<dbReference type="PROSITE" id="PS00843">
    <property type="entry name" value="DALA_DALA_LIGASE_1"/>
    <property type="match status" value="1"/>
</dbReference>
<dbReference type="PROSITE" id="PS00844">
    <property type="entry name" value="DALA_DALA_LIGASE_2"/>
    <property type="match status" value="1"/>
</dbReference>
<protein>
    <recommendedName>
        <fullName>D-alanine--D-alanine ligase A</fullName>
        <ecNumber>6.3.2.4</ecNumber>
    </recommendedName>
    <alternativeName>
        <fullName>D-Ala-D-Ala ligase A</fullName>
    </alternativeName>
    <alternativeName>
        <fullName>D-alanylalanine synthetase A</fullName>
    </alternativeName>
</protein>
<organism>
    <name type="scientific">Salmonella typhimurium (strain LT2 / SGSC1412 / ATCC 700720)</name>
    <dbReference type="NCBI Taxonomy" id="99287"/>
    <lineage>
        <taxon>Bacteria</taxon>
        <taxon>Pseudomonadati</taxon>
        <taxon>Pseudomonadota</taxon>
        <taxon>Gammaproteobacteria</taxon>
        <taxon>Enterobacterales</taxon>
        <taxon>Enterobacteriaceae</taxon>
        <taxon>Salmonella</taxon>
    </lineage>
</organism>
<evidence type="ECO:0000250" key="1"/>
<evidence type="ECO:0000269" key="2">
    <source>
    </source>
</evidence>
<evidence type="ECO:0000305" key="3"/>
<evidence type="ECO:0007829" key="4">
    <source>
        <dbReference type="PDB" id="3I12"/>
    </source>
</evidence>
<keyword id="KW-0002">3D-structure</keyword>
<keyword id="KW-0067">ATP-binding</keyword>
<keyword id="KW-0133">Cell shape</keyword>
<keyword id="KW-0961">Cell wall biogenesis/degradation</keyword>
<keyword id="KW-0963">Cytoplasm</keyword>
<keyword id="KW-0903">Direct protein sequencing</keyword>
<keyword id="KW-0436">Ligase</keyword>
<keyword id="KW-0460">Magnesium</keyword>
<keyword id="KW-0464">Manganese</keyword>
<keyword id="KW-0479">Metal-binding</keyword>
<keyword id="KW-0547">Nucleotide-binding</keyword>
<keyword id="KW-0573">Peptidoglycan synthesis</keyword>
<keyword id="KW-1185">Reference proteome</keyword>
<feature type="initiator methionine" description="Removed" evidence="2">
    <location>
        <position position="1"/>
    </location>
</feature>
<feature type="chain" id="PRO_0000177868" description="D-alanine--D-alanine ligase A">
    <location>
        <begin position="2"/>
        <end position="364"/>
    </location>
</feature>
<feature type="domain" description="ATP-grasp">
    <location>
        <begin position="145"/>
        <end position="348"/>
    </location>
</feature>
<feature type="binding site" evidence="1">
    <location>
        <begin position="175"/>
        <end position="230"/>
    </location>
    <ligand>
        <name>ATP</name>
        <dbReference type="ChEBI" id="CHEBI:30616"/>
    </ligand>
</feature>
<feature type="binding site" evidence="1">
    <location>
        <position position="302"/>
    </location>
    <ligand>
        <name>Mg(2+)</name>
        <dbReference type="ChEBI" id="CHEBI:18420"/>
        <label>1</label>
    </ligand>
</feature>
<feature type="binding site" evidence="1">
    <location>
        <position position="315"/>
    </location>
    <ligand>
        <name>Mg(2+)</name>
        <dbReference type="ChEBI" id="CHEBI:18420"/>
        <label>1</label>
    </ligand>
</feature>
<feature type="binding site" evidence="1">
    <location>
        <position position="315"/>
    </location>
    <ligand>
        <name>Mg(2+)</name>
        <dbReference type="ChEBI" id="CHEBI:18420"/>
        <label>2</label>
    </ligand>
</feature>
<feature type="binding site" evidence="1">
    <location>
        <position position="317"/>
    </location>
    <ligand>
        <name>Mg(2+)</name>
        <dbReference type="ChEBI" id="CHEBI:18420"/>
        <label>2</label>
    </ligand>
</feature>
<feature type="sequence variant">
    <original>H</original>
    <variation>A</variation>
    <location>
        <position position="17"/>
    </location>
</feature>
<feature type="strand" evidence="4">
    <location>
        <begin position="4"/>
        <end position="11"/>
    </location>
</feature>
<feature type="helix" evidence="4">
    <location>
        <begin position="17"/>
        <end position="30"/>
    </location>
</feature>
<feature type="turn" evidence="4">
    <location>
        <begin position="33"/>
        <end position="35"/>
    </location>
</feature>
<feature type="strand" evidence="4">
    <location>
        <begin position="36"/>
        <end position="43"/>
    </location>
</feature>
<feature type="strand" evidence="4">
    <location>
        <begin position="49"/>
        <end position="52"/>
    </location>
</feature>
<feature type="strand" evidence="4">
    <location>
        <begin position="54"/>
        <end position="60"/>
    </location>
</feature>
<feature type="turn" evidence="4">
    <location>
        <begin position="64"/>
        <end position="66"/>
    </location>
</feature>
<feature type="strand" evidence="4">
    <location>
        <begin position="75"/>
        <end position="78"/>
    </location>
</feature>
<feature type="strand" evidence="4">
    <location>
        <begin position="83"/>
        <end position="85"/>
    </location>
</feature>
<feature type="strand" evidence="4">
    <location>
        <begin position="87"/>
        <end position="89"/>
    </location>
</feature>
<feature type="turn" evidence="4">
    <location>
        <begin position="90"/>
        <end position="92"/>
    </location>
</feature>
<feature type="strand" evidence="4">
    <location>
        <begin position="100"/>
        <end position="104"/>
    </location>
</feature>
<feature type="turn" evidence="4">
    <location>
        <begin position="109"/>
        <end position="112"/>
    </location>
</feature>
<feature type="helix" evidence="4">
    <location>
        <begin position="115"/>
        <end position="122"/>
    </location>
</feature>
<feature type="strand" evidence="4">
    <location>
        <begin position="127"/>
        <end position="129"/>
    </location>
</feature>
<feature type="helix" evidence="4">
    <location>
        <begin position="132"/>
        <end position="139"/>
    </location>
</feature>
<feature type="helix" evidence="4">
    <location>
        <begin position="141"/>
        <end position="150"/>
    </location>
</feature>
<feature type="strand" evidence="4">
    <location>
        <begin position="158"/>
        <end position="162"/>
    </location>
</feature>
<feature type="turn" evidence="4">
    <location>
        <begin position="163"/>
        <end position="165"/>
    </location>
</feature>
<feature type="helix" evidence="4">
    <location>
        <begin position="166"/>
        <end position="168"/>
    </location>
</feature>
<feature type="helix" evidence="4">
    <location>
        <begin position="171"/>
        <end position="178"/>
    </location>
</feature>
<feature type="strand" evidence="4">
    <location>
        <begin position="180"/>
        <end position="186"/>
    </location>
</feature>
<feature type="turn" evidence="4">
    <location>
        <begin position="191"/>
        <end position="194"/>
    </location>
</feature>
<feature type="strand" evidence="4">
    <location>
        <begin position="196"/>
        <end position="200"/>
    </location>
</feature>
<feature type="helix" evidence="4">
    <location>
        <begin position="201"/>
        <end position="214"/>
    </location>
</feature>
<feature type="strand" evidence="4">
    <location>
        <begin position="216"/>
        <end position="222"/>
    </location>
</feature>
<feature type="strand" evidence="4">
    <location>
        <begin position="226"/>
        <end position="238"/>
    </location>
</feature>
<feature type="strand" evidence="4">
    <location>
        <begin position="240"/>
        <end position="248"/>
    </location>
</feature>
<feature type="turn" evidence="4">
    <location>
        <begin position="257"/>
        <end position="260"/>
    </location>
</feature>
<feature type="helix" evidence="4">
    <location>
        <begin position="262"/>
        <end position="265"/>
    </location>
</feature>
<feature type="strand" evidence="4">
    <location>
        <begin position="267"/>
        <end position="271"/>
    </location>
</feature>
<feature type="helix" evidence="4">
    <location>
        <begin position="276"/>
        <end position="292"/>
    </location>
</feature>
<feature type="strand" evidence="4">
    <location>
        <begin position="297"/>
        <end position="305"/>
    </location>
</feature>
<feature type="strand" evidence="4">
    <location>
        <begin position="311"/>
        <end position="319"/>
    </location>
</feature>
<feature type="helix" evidence="4">
    <location>
        <begin position="327"/>
        <end position="333"/>
    </location>
</feature>
<feature type="turn" evidence="4">
    <location>
        <begin position="334"/>
        <end position="336"/>
    </location>
</feature>
<feature type="helix" evidence="4">
    <location>
        <begin position="339"/>
        <end position="359"/>
    </location>
</feature>
<reference key="1">
    <citation type="journal article" date="1988" name="Biochemistry">
        <title>Isolation, cloning, and sequencing of the Salmonella typhimurium ddlA gene with purification and characterization of its product, D-alanine:D-alanine ligase (ADP forming).</title>
        <authorList>
            <person name="Daub E."/>
            <person name="Zawadzke L.E."/>
            <person name="Botstein D."/>
            <person name="Walsh C.T."/>
        </authorList>
    </citation>
    <scope>NUCLEOTIDE SEQUENCE [GENOMIC DNA]</scope>
    <scope>PROTEIN SEQUENCE OF 2-36</scope>
</reference>
<reference key="2">
    <citation type="journal article" date="2001" name="Nature">
        <title>Complete genome sequence of Salmonella enterica serovar Typhimurium LT2.</title>
        <authorList>
            <person name="McClelland M."/>
            <person name="Sanderson K.E."/>
            <person name="Spieth J."/>
            <person name="Clifton S.W."/>
            <person name="Latreille P."/>
            <person name="Courtney L."/>
            <person name="Porwollik S."/>
            <person name="Ali J."/>
            <person name="Dante M."/>
            <person name="Du F."/>
            <person name="Hou S."/>
            <person name="Layman D."/>
            <person name="Leonard S."/>
            <person name="Nguyen C."/>
            <person name="Scott K."/>
            <person name="Holmes A."/>
            <person name="Grewal N."/>
            <person name="Mulvaney E."/>
            <person name="Ryan E."/>
            <person name="Sun H."/>
            <person name="Florea L."/>
            <person name="Miller W."/>
            <person name="Stoneking T."/>
            <person name="Nhan M."/>
            <person name="Waterston R."/>
            <person name="Wilson R.K."/>
        </authorList>
    </citation>
    <scope>NUCLEOTIDE SEQUENCE [LARGE SCALE GENOMIC DNA]</scope>
    <source>
        <strain>LT2 / SGSC1412 / ATCC 700720</strain>
    </source>
</reference>
<comment type="function">
    <text>Cell wall formation.</text>
</comment>
<comment type="catalytic activity">
    <reaction>
        <text>2 D-alanine + ATP = D-alanyl-D-alanine + ADP + phosphate + H(+)</text>
        <dbReference type="Rhea" id="RHEA:11224"/>
        <dbReference type="ChEBI" id="CHEBI:15378"/>
        <dbReference type="ChEBI" id="CHEBI:30616"/>
        <dbReference type="ChEBI" id="CHEBI:43474"/>
        <dbReference type="ChEBI" id="CHEBI:57416"/>
        <dbReference type="ChEBI" id="CHEBI:57822"/>
        <dbReference type="ChEBI" id="CHEBI:456216"/>
        <dbReference type="EC" id="6.3.2.4"/>
    </reaction>
</comment>
<comment type="cofactor">
    <cofactor evidence="1">
        <name>Mg(2+)</name>
        <dbReference type="ChEBI" id="CHEBI:18420"/>
    </cofactor>
    <cofactor evidence="1">
        <name>Mn(2+)</name>
        <dbReference type="ChEBI" id="CHEBI:29035"/>
    </cofactor>
    <text evidence="1">Binds 2 magnesium or manganese ions per subunit.</text>
</comment>
<comment type="pathway">
    <text>Cell wall biogenesis; peptidoglycan biosynthesis.</text>
</comment>
<comment type="subcellular location">
    <subcellularLocation>
        <location>Cytoplasm</location>
    </subcellularLocation>
</comment>
<comment type="similarity">
    <text evidence="3">Belongs to the D-alanine--D-alanine ligase family.</text>
</comment>
<proteinExistence type="evidence at protein level"/>
<sequence length="364" mass="39357">MAKLRVGIVFGGKSAEHEVSLQSAKNIVDAIDKTRFDVVLLGIDKAGQWHVNDAENYLQNADDPAHIALRPSAISLAQVPGKHQHQLINAQNGQPLPTVDVIFPIVHGTLGEDGSLQGMLRVANLPFVGSDVLSSAACMDKDVAKRLLRDAGLNIAPFITLTRTNRHAFSFAEVESRLGLPLFVKPANQGSSVGVSKVANEAQYQQAVALAFEFDHKVVVEQGIKGREIECAVLGNDNPQASTCGEIVLNSEFYAYDTKYIDDNGAQVVVPAQIPSEVNDKIRAIAIQAYQTLGCAGMARVDVFLTADNEVVINEINTLPGFTNISMYPKLWQASGLGYTDLISRLIELALERHTANNALKTTM</sequence>
<accession>P0A1F0</accession>
<accession>P15051</accession>
<gene>
    <name type="primary">ddlA</name>
    <name type="ordered locus">STM0380</name>
</gene>
<name>DDLA_SALTY</name>